<evidence type="ECO:0000255" key="1">
    <source>
        <dbReference type="HAMAP-Rule" id="MF_00382"/>
    </source>
</evidence>
<evidence type="ECO:0000305" key="2"/>
<gene>
    <name evidence="1" type="primary">rplT</name>
    <name type="ordered locus">CC_1045</name>
</gene>
<keyword id="KW-1185">Reference proteome</keyword>
<keyword id="KW-0687">Ribonucleoprotein</keyword>
<keyword id="KW-0689">Ribosomal protein</keyword>
<keyword id="KW-0694">RNA-binding</keyword>
<keyword id="KW-0699">rRNA-binding</keyword>
<dbReference type="EMBL" id="AE005673">
    <property type="protein sequence ID" value="AAK23029.1"/>
    <property type="molecule type" value="Genomic_DNA"/>
</dbReference>
<dbReference type="PIR" id="A87379">
    <property type="entry name" value="A87379"/>
</dbReference>
<dbReference type="RefSeq" id="NP_419861.1">
    <property type="nucleotide sequence ID" value="NC_002696.2"/>
</dbReference>
<dbReference type="RefSeq" id="WP_010918929.1">
    <property type="nucleotide sequence ID" value="NC_002696.2"/>
</dbReference>
<dbReference type="SMR" id="Q9A9E3"/>
<dbReference type="STRING" id="190650.CC_1045"/>
<dbReference type="EnsemblBacteria" id="AAK23029">
    <property type="protein sequence ID" value="AAK23029"/>
    <property type="gene ID" value="CC_1045"/>
</dbReference>
<dbReference type="KEGG" id="ccr:CC_1045"/>
<dbReference type="PATRIC" id="fig|190650.5.peg.1062"/>
<dbReference type="eggNOG" id="COG0292">
    <property type="taxonomic scope" value="Bacteria"/>
</dbReference>
<dbReference type="HOGENOM" id="CLU_123265_0_1_5"/>
<dbReference type="BioCyc" id="CAULO:CC1045-MONOMER"/>
<dbReference type="Proteomes" id="UP000001816">
    <property type="component" value="Chromosome"/>
</dbReference>
<dbReference type="GO" id="GO:1990904">
    <property type="term" value="C:ribonucleoprotein complex"/>
    <property type="evidence" value="ECO:0007669"/>
    <property type="project" value="UniProtKB-KW"/>
</dbReference>
<dbReference type="GO" id="GO:0005840">
    <property type="term" value="C:ribosome"/>
    <property type="evidence" value="ECO:0007669"/>
    <property type="project" value="UniProtKB-KW"/>
</dbReference>
<dbReference type="GO" id="GO:0019843">
    <property type="term" value="F:rRNA binding"/>
    <property type="evidence" value="ECO:0007669"/>
    <property type="project" value="UniProtKB-UniRule"/>
</dbReference>
<dbReference type="GO" id="GO:0003735">
    <property type="term" value="F:structural constituent of ribosome"/>
    <property type="evidence" value="ECO:0007669"/>
    <property type="project" value="InterPro"/>
</dbReference>
<dbReference type="GO" id="GO:0000027">
    <property type="term" value="P:ribosomal large subunit assembly"/>
    <property type="evidence" value="ECO:0007669"/>
    <property type="project" value="UniProtKB-UniRule"/>
</dbReference>
<dbReference type="GO" id="GO:0006412">
    <property type="term" value="P:translation"/>
    <property type="evidence" value="ECO:0007669"/>
    <property type="project" value="InterPro"/>
</dbReference>
<dbReference type="CDD" id="cd07026">
    <property type="entry name" value="Ribosomal_L20"/>
    <property type="match status" value="1"/>
</dbReference>
<dbReference type="FunFam" id="1.10.1900.20:FF:000001">
    <property type="entry name" value="50S ribosomal protein L20"/>
    <property type="match status" value="1"/>
</dbReference>
<dbReference type="Gene3D" id="6.10.160.10">
    <property type="match status" value="1"/>
</dbReference>
<dbReference type="Gene3D" id="1.10.1900.20">
    <property type="entry name" value="Ribosomal protein L20"/>
    <property type="match status" value="1"/>
</dbReference>
<dbReference type="HAMAP" id="MF_00382">
    <property type="entry name" value="Ribosomal_bL20"/>
    <property type="match status" value="1"/>
</dbReference>
<dbReference type="InterPro" id="IPR005813">
    <property type="entry name" value="Ribosomal_bL20"/>
</dbReference>
<dbReference type="InterPro" id="IPR049946">
    <property type="entry name" value="RIBOSOMAL_L20_CS"/>
</dbReference>
<dbReference type="InterPro" id="IPR035566">
    <property type="entry name" value="Ribosomal_protein_bL20_C"/>
</dbReference>
<dbReference type="NCBIfam" id="TIGR01032">
    <property type="entry name" value="rplT_bact"/>
    <property type="match status" value="1"/>
</dbReference>
<dbReference type="PANTHER" id="PTHR10986">
    <property type="entry name" value="39S RIBOSOMAL PROTEIN L20"/>
    <property type="match status" value="1"/>
</dbReference>
<dbReference type="Pfam" id="PF00453">
    <property type="entry name" value="Ribosomal_L20"/>
    <property type="match status" value="1"/>
</dbReference>
<dbReference type="PRINTS" id="PR00062">
    <property type="entry name" value="RIBOSOMALL20"/>
</dbReference>
<dbReference type="SUPFAM" id="SSF74731">
    <property type="entry name" value="Ribosomal protein L20"/>
    <property type="match status" value="1"/>
</dbReference>
<dbReference type="PROSITE" id="PS00937">
    <property type="entry name" value="RIBOSOMAL_L20"/>
    <property type="match status" value="1"/>
</dbReference>
<proteinExistence type="inferred from homology"/>
<sequence length="118" mass="13152">MARVKRGVVAHAKHKKVLEQAKGFYGRRKNTIRTAKAAVDKAGQYAYRDRKVRKRAFRSLWIQRINAGARLEGFTYSQFIHGLDVAGIVMDRKVLADIAGNDPAAFKAIADKVRAALA</sequence>
<protein>
    <recommendedName>
        <fullName evidence="1">Large ribosomal subunit protein bL20</fullName>
    </recommendedName>
    <alternativeName>
        <fullName evidence="2">50S ribosomal protein L20</fullName>
    </alternativeName>
</protein>
<organism>
    <name type="scientific">Caulobacter vibrioides (strain ATCC 19089 / CIP 103742 / CB 15)</name>
    <name type="common">Caulobacter crescentus</name>
    <dbReference type="NCBI Taxonomy" id="190650"/>
    <lineage>
        <taxon>Bacteria</taxon>
        <taxon>Pseudomonadati</taxon>
        <taxon>Pseudomonadota</taxon>
        <taxon>Alphaproteobacteria</taxon>
        <taxon>Caulobacterales</taxon>
        <taxon>Caulobacteraceae</taxon>
        <taxon>Caulobacter</taxon>
    </lineage>
</organism>
<reference key="1">
    <citation type="journal article" date="2001" name="Proc. Natl. Acad. Sci. U.S.A.">
        <title>Complete genome sequence of Caulobacter crescentus.</title>
        <authorList>
            <person name="Nierman W.C."/>
            <person name="Feldblyum T.V."/>
            <person name="Laub M.T."/>
            <person name="Paulsen I.T."/>
            <person name="Nelson K.E."/>
            <person name="Eisen J.A."/>
            <person name="Heidelberg J.F."/>
            <person name="Alley M.R.K."/>
            <person name="Ohta N."/>
            <person name="Maddock J.R."/>
            <person name="Potocka I."/>
            <person name="Nelson W.C."/>
            <person name="Newton A."/>
            <person name="Stephens C."/>
            <person name="Phadke N.D."/>
            <person name="Ely B."/>
            <person name="DeBoy R.T."/>
            <person name="Dodson R.J."/>
            <person name="Durkin A.S."/>
            <person name="Gwinn M.L."/>
            <person name="Haft D.H."/>
            <person name="Kolonay J.F."/>
            <person name="Smit J."/>
            <person name="Craven M.B."/>
            <person name="Khouri H.M."/>
            <person name="Shetty J."/>
            <person name="Berry K.J."/>
            <person name="Utterback T.R."/>
            <person name="Tran K."/>
            <person name="Wolf A.M."/>
            <person name="Vamathevan J.J."/>
            <person name="Ermolaeva M.D."/>
            <person name="White O."/>
            <person name="Salzberg S.L."/>
            <person name="Venter J.C."/>
            <person name="Shapiro L."/>
            <person name="Fraser C.M."/>
        </authorList>
    </citation>
    <scope>NUCLEOTIDE SEQUENCE [LARGE SCALE GENOMIC DNA]</scope>
    <source>
        <strain>ATCC 19089 / CIP 103742 / CB 15</strain>
    </source>
</reference>
<feature type="chain" id="PRO_0000177139" description="Large ribosomal subunit protein bL20">
    <location>
        <begin position="1"/>
        <end position="118"/>
    </location>
</feature>
<comment type="function">
    <text evidence="1">Binds directly to 23S ribosomal RNA and is necessary for the in vitro assembly process of the 50S ribosomal subunit. It is not involved in the protein synthesizing functions of that subunit.</text>
</comment>
<comment type="similarity">
    <text evidence="1">Belongs to the bacterial ribosomal protein bL20 family.</text>
</comment>
<accession>Q9A9E3</accession>
<name>RL20_CAUVC</name>